<reference key="1">
    <citation type="journal article" date="2006" name="Proc. Natl. Acad. Sci. U.S.A.">
        <title>Comparative genomics of the lactic acid bacteria.</title>
        <authorList>
            <person name="Makarova K.S."/>
            <person name="Slesarev A."/>
            <person name="Wolf Y.I."/>
            <person name="Sorokin A."/>
            <person name="Mirkin B."/>
            <person name="Koonin E.V."/>
            <person name="Pavlov A."/>
            <person name="Pavlova N."/>
            <person name="Karamychev V."/>
            <person name="Polouchine N."/>
            <person name="Shakhova V."/>
            <person name="Grigoriev I."/>
            <person name="Lou Y."/>
            <person name="Rohksar D."/>
            <person name="Lucas S."/>
            <person name="Huang K."/>
            <person name="Goodstein D.M."/>
            <person name="Hawkins T."/>
            <person name="Plengvidhya V."/>
            <person name="Welker D."/>
            <person name="Hughes J."/>
            <person name="Goh Y."/>
            <person name="Benson A."/>
            <person name="Baldwin K."/>
            <person name="Lee J.-H."/>
            <person name="Diaz-Muniz I."/>
            <person name="Dosti B."/>
            <person name="Smeianov V."/>
            <person name="Wechter W."/>
            <person name="Barabote R."/>
            <person name="Lorca G."/>
            <person name="Altermann E."/>
            <person name="Barrangou R."/>
            <person name="Ganesan B."/>
            <person name="Xie Y."/>
            <person name="Rawsthorne H."/>
            <person name="Tamir D."/>
            <person name="Parker C."/>
            <person name="Breidt F."/>
            <person name="Broadbent J.R."/>
            <person name="Hutkins R."/>
            <person name="O'Sullivan D."/>
            <person name="Steele J."/>
            <person name="Unlu G."/>
            <person name="Saier M.H. Jr."/>
            <person name="Klaenhammer T."/>
            <person name="Richardson P."/>
            <person name="Kozyavkin S."/>
            <person name="Weimer B.C."/>
            <person name="Mills D.A."/>
        </authorList>
    </citation>
    <scope>NUCLEOTIDE SEQUENCE [LARGE SCALE GENOMIC DNA]</scope>
    <source>
        <strain>ATCC 367 / BCRC 12310 / CIP 105137 / JCM 1170 / LMG 11437 / NCIMB 947 / NCTC 947</strain>
    </source>
</reference>
<organism>
    <name type="scientific">Levilactobacillus brevis (strain ATCC 367 / BCRC 12310 / CIP 105137 / JCM 1170 / LMG 11437 / NCIMB 947 / NCTC 947)</name>
    <name type="common">Lactobacillus brevis</name>
    <dbReference type="NCBI Taxonomy" id="387344"/>
    <lineage>
        <taxon>Bacteria</taxon>
        <taxon>Bacillati</taxon>
        <taxon>Bacillota</taxon>
        <taxon>Bacilli</taxon>
        <taxon>Lactobacillales</taxon>
        <taxon>Lactobacillaceae</taxon>
        <taxon>Levilactobacillus</taxon>
    </lineage>
</organism>
<proteinExistence type="inferred from homology"/>
<comment type="function">
    <text evidence="1">Located on the platform of the 30S subunit, it bridges several disparate RNA helices of the 16S rRNA. Forms part of the Shine-Dalgarno cleft in the 70S ribosome.</text>
</comment>
<comment type="subunit">
    <text evidence="1">Part of the 30S ribosomal subunit. Interacts with proteins S7 and S18. Binds to IF-3.</text>
</comment>
<comment type="similarity">
    <text evidence="1">Belongs to the universal ribosomal protein uS11 family.</text>
</comment>
<feature type="chain" id="PRO_0000294773" description="Small ribosomal subunit protein uS11">
    <location>
        <begin position="1"/>
        <end position="129"/>
    </location>
</feature>
<dbReference type="EMBL" id="CP000416">
    <property type="protein sequence ID" value="ABJ64740.1"/>
    <property type="molecule type" value="Genomic_DNA"/>
</dbReference>
<dbReference type="RefSeq" id="WP_011668474.1">
    <property type="nucleotide sequence ID" value="NC_008497.1"/>
</dbReference>
<dbReference type="SMR" id="Q03PY2"/>
<dbReference type="STRING" id="387344.LVIS_1665"/>
<dbReference type="GeneID" id="56993526"/>
<dbReference type="KEGG" id="lbr:LVIS_1665"/>
<dbReference type="eggNOG" id="COG0100">
    <property type="taxonomic scope" value="Bacteria"/>
</dbReference>
<dbReference type="HOGENOM" id="CLU_072439_5_0_9"/>
<dbReference type="Proteomes" id="UP000001652">
    <property type="component" value="Chromosome"/>
</dbReference>
<dbReference type="GO" id="GO:1990904">
    <property type="term" value="C:ribonucleoprotein complex"/>
    <property type="evidence" value="ECO:0007669"/>
    <property type="project" value="UniProtKB-KW"/>
</dbReference>
<dbReference type="GO" id="GO:0005840">
    <property type="term" value="C:ribosome"/>
    <property type="evidence" value="ECO:0007669"/>
    <property type="project" value="UniProtKB-KW"/>
</dbReference>
<dbReference type="GO" id="GO:0019843">
    <property type="term" value="F:rRNA binding"/>
    <property type="evidence" value="ECO:0007669"/>
    <property type="project" value="UniProtKB-UniRule"/>
</dbReference>
<dbReference type="GO" id="GO:0003735">
    <property type="term" value="F:structural constituent of ribosome"/>
    <property type="evidence" value="ECO:0007669"/>
    <property type="project" value="InterPro"/>
</dbReference>
<dbReference type="GO" id="GO:0006412">
    <property type="term" value="P:translation"/>
    <property type="evidence" value="ECO:0007669"/>
    <property type="project" value="UniProtKB-UniRule"/>
</dbReference>
<dbReference type="FunFam" id="3.30.420.80:FF:000001">
    <property type="entry name" value="30S ribosomal protein S11"/>
    <property type="match status" value="1"/>
</dbReference>
<dbReference type="Gene3D" id="3.30.420.80">
    <property type="entry name" value="Ribosomal protein S11"/>
    <property type="match status" value="1"/>
</dbReference>
<dbReference type="HAMAP" id="MF_01310">
    <property type="entry name" value="Ribosomal_uS11"/>
    <property type="match status" value="1"/>
</dbReference>
<dbReference type="InterPro" id="IPR001971">
    <property type="entry name" value="Ribosomal_uS11"/>
</dbReference>
<dbReference type="InterPro" id="IPR019981">
    <property type="entry name" value="Ribosomal_uS11_bac-type"/>
</dbReference>
<dbReference type="InterPro" id="IPR018102">
    <property type="entry name" value="Ribosomal_uS11_CS"/>
</dbReference>
<dbReference type="InterPro" id="IPR036967">
    <property type="entry name" value="Ribosomal_uS11_sf"/>
</dbReference>
<dbReference type="NCBIfam" id="NF003698">
    <property type="entry name" value="PRK05309.1"/>
    <property type="match status" value="1"/>
</dbReference>
<dbReference type="NCBIfam" id="TIGR03632">
    <property type="entry name" value="uS11_bact"/>
    <property type="match status" value="1"/>
</dbReference>
<dbReference type="PANTHER" id="PTHR11759">
    <property type="entry name" value="40S RIBOSOMAL PROTEIN S14/30S RIBOSOMAL PROTEIN S11"/>
    <property type="match status" value="1"/>
</dbReference>
<dbReference type="Pfam" id="PF00411">
    <property type="entry name" value="Ribosomal_S11"/>
    <property type="match status" value="1"/>
</dbReference>
<dbReference type="PIRSF" id="PIRSF002131">
    <property type="entry name" value="Ribosomal_S11"/>
    <property type="match status" value="1"/>
</dbReference>
<dbReference type="SUPFAM" id="SSF53137">
    <property type="entry name" value="Translational machinery components"/>
    <property type="match status" value="1"/>
</dbReference>
<dbReference type="PROSITE" id="PS00054">
    <property type="entry name" value="RIBOSOMAL_S11"/>
    <property type="match status" value="1"/>
</dbReference>
<keyword id="KW-1185">Reference proteome</keyword>
<keyword id="KW-0687">Ribonucleoprotein</keyword>
<keyword id="KW-0689">Ribosomal protein</keyword>
<keyword id="KW-0694">RNA-binding</keyword>
<keyword id="KW-0699">rRNA-binding</keyword>
<name>RS11_LEVBA</name>
<evidence type="ECO:0000255" key="1">
    <source>
        <dbReference type="HAMAP-Rule" id="MF_01310"/>
    </source>
</evidence>
<evidence type="ECO:0000305" key="2"/>
<gene>
    <name evidence="1" type="primary">rpsK</name>
    <name type="ordered locus">LVIS_1665</name>
</gene>
<protein>
    <recommendedName>
        <fullName evidence="1">Small ribosomal subunit protein uS11</fullName>
    </recommendedName>
    <alternativeName>
        <fullName evidence="2">30S ribosomal protein S11</fullName>
    </alternativeName>
</protein>
<accession>Q03PY2</accession>
<sequence length="129" mass="13649">MATRKTSRKRRVKKNIEAGVAHIHATFNNTLVMITDVQGNAIAWSSAGALGFKGSRKSTPFAAQMAAEAAAKASQEHGIKSVEVAVKGPGSGRESAIRAIQAAGIEITAIRDVTPVPHNGTRPPKRRRV</sequence>